<sequence length="187" mass="22448">MALEAWFMDDSNEDQRLPHHRNPKELVSLDYLAELGVLYWKLNPENYENDSELSKIREDRGYDYMDLLDLCPEKVSNYEEKLKNFFTEHIHKDEEIRYCLAGSGYFDVRDKDDRWIRIWMQPGDLIVLPAGIYHRFTLDASNYIKLMRLFVGEPVWTPYNRPQEEHPVRKKYIHGLTYKFGETVKAH</sequence>
<protein>
    <recommendedName>
        <fullName evidence="1">Acireductone dioxygenase 4</fullName>
    </recommendedName>
    <alternativeName>
        <fullName evidence="1">Acireductone dioxygenase (Fe(2+)-requiring) 4</fullName>
        <shortName evidence="1">ARD' 4</shortName>
        <shortName evidence="1">Fe-ARD 4</shortName>
        <ecNumber evidence="1">1.13.11.54</ecNumber>
    </alternativeName>
    <alternativeName>
        <fullName evidence="1">Acireductone dioxygenase (Ni(2+)-requiring) 4</fullName>
        <shortName evidence="1">ARD 4</shortName>
        <shortName evidence="1">Ni-ARD 4</shortName>
        <ecNumber evidence="1">1.13.11.53</ecNumber>
    </alternativeName>
</protein>
<dbReference type="EC" id="1.13.11.54" evidence="1"/>
<dbReference type="EC" id="1.13.11.53" evidence="1"/>
<dbReference type="EMBL" id="AB026651">
    <property type="protein sequence ID" value="BAB11314.1"/>
    <property type="status" value="ALT_SEQ"/>
    <property type="molecule type" value="Genomic_DNA"/>
</dbReference>
<dbReference type="EMBL" id="CP002688">
    <property type="protein sequence ID" value="AED95017.1"/>
    <property type="molecule type" value="Genomic_DNA"/>
</dbReference>
<dbReference type="EMBL" id="BT000432">
    <property type="protein sequence ID" value="AAN17409.1"/>
    <property type="molecule type" value="mRNA"/>
</dbReference>
<dbReference type="EMBL" id="BT006566">
    <property type="protein sequence ID" value="AAP21374.1"/>
    <property type="molecule type" value="mRNA"/>
</dbReference>
<dbReference type="EMBL" id="AY086650">
    <property type="protein sequence ID" value="AAM63708.1"/>
    <property type="molecule type" value="mRNA"/>
</dbReference>
<dbReference type="RefSeq" id="NP_568630.1">
    <property type="nucleotide sequence ID" value="NM_123752.4"/>
</dbReference>
<dbReference type="SMR" id="Q8H185"/>
<dbReference type="BioGRID" id="19657">
    <property type="interactions" value="12"/>
</dbReference>
<dbReference type="FunCoup" id="Q8H185">
    <property type="interactions" value="1356"/>
</dbReference>
<dbReference type="STRING" id="3702.Q8H185"/>
<dbReference type="iPTMnet" id="Q8H185"/>
<dbReference type="PaxDb" id="3702-AT5G43850.1"/>
<dbReference type="ProteomicsDB" id="251393"/>
<dbReference type="DNASU" id="834407"/>
<dbReference type="EnsemblPlants" id="AT5G43850.1">
    <property type="protein sequence ID" value="AT5G43850.1"/>
    <property type="gene ID" value="AT5G43850"/>
</dbReference>
<dbReference type="GeneID" id="834407"/>
<dbReference type="Gramene" id="AT5G43850.1">
    <property type="protein sequence ID" value="AT5G43850.1"/>
    <property type="gene ID" value="AT5G43850"/>
</dbReference>
<dbReference type="KEGG" id="ath:AT5G43850"/>
<dbReference type="Araport" id="AT5G43850"/>
<dbReference type="TAIR" id="AT5G43850">
    <property type="gene designation" value="ARD4"/>
</dbReference>
<dbReference type="eggNOG" id="KOG2107">
    <property type="taxonomic scope" value="Eukaryota"/>
</dbReference>
<dbReference type="HOGENOM" id="CLU_090154_0_0_1"/>
<dbReference type="InParanoid" id="Q8H185"/>
<dbReference type="OMA" id="NNYIKLM"/>
<dbReference type="PhylomeDB" id="Q8H185"/>
<dbReference type="BioCyc" id="ARA:AT5G43850-MONOMER"/>
<dbReference type="UniPathway" id="UPA00904">
    <property type="reaction ID" value="UER00878"/>
</dbReference>
<dbReference type="PRO" id="PR:Q8H185"/>
<dbReference type="Proteomes" id="UP000006548">
    <property type="component" value="Chromosome 5"/>
</dbReference>
<dbReference type="ExpressionAtlas" id="Q8H185">
    <property type="expression patterns" value="baseline and differential"/>
</dbReference>
<dbReference type="GO" id="GO:0005829">
    <property type="term" value="C:cytosol"/>
    <property type="evidence" value="ECO:0007005"/>
    <property type="project" value="TAIR"/>
</dbReference>
<dbReference type="GO" id="GO:0005634">
    <property type="term" value="C:nucleus"/>
    <property type="evidence" value="ECO:0007669"/>
    <property type="project" value="UniProtKB-SubCell"/>
</dbReference>
<dbReference type="GO" id="GO:0010308">
    <property type="term" value="F:acireductone dioxygenase (Ni2+-requiring) activity"/>
    <property type="evidence" value="ECO:0007669"/>
    <property type="project" value="UniProtKB-UniRule"/>
</dbReference>
<dbReference type="GO" id="GO:0010309">
    <property type="term" value="F:acireductone dioxygenase [iron(II)-requiring] activity"/>
    <property type="evidence" value="ECO:0000250"/>
    <property type="project" value="TAIR"/>
</dbReference>
<dbReference type="GO" id="GO:0005506">
    <property type="term" value="F:iron ion binding"/>
    <property type="evidence" value="ECO:0007669"/>
    <property type="project" value="UniProtKB-UniRule"/>
</dbReference>
<dbReference type="GO" id="GO:0016151">
    <property type="term" value="F:nickel cation binding"/>
    <property type="evidence" value="ECO:0007669"/>
    <property type="project" value="UniProtKB-UniRule"/>
</dbReference>
<dbReference type="GO" id="GO:0019509">
    <property type="term" value="P:L-methionine salvage from methylthioadenosine"/>
    <property type="evidence" value="ECO:0007669"/>
    <property type="project" value="UniProtKB-UniRule"/>
</dbReference>
<dbReference type="CDD" id="cd02232">
    <property type="entry name" value="cupin_ARD"/>
    <property type="match status" value="1"/>
</dbReference>
<dbReference type="FunFam" id="2.60.120.10:FF:000031">
    <property type="entry name" value="1,2-dihydroxy-3-keto-5-methylthiopentene dioxygenase"/>
    <property type="match status" value="1"/>
</dbReference>
<dbReference type="Gene3D" id="2.60.120.10">
    <property type="entry name" value="Jelly Rolls"/>
    <property type="match status" value="1"/>
</dbReference>
<dbReference type="HAMAP" id="MF_03154">
    <property type="entry name" value="Salvage_MtnD_euk"/>
    <property type="match status" value="1"/>
</dbReference>
<dbReference type="InterPro" id="IPR004313">
    <property type="entry name" value="ARD"/>
</dbReference>
<dbReference type="InterPro" id="IPR027496">
    <property type="entry name" value="ARD_euk"/>
</dbReference>
<dbReference type="InterPro" id="IPR014710">
    <property type="entry name" value="RmlC-like_jellyroll"/>
</dbReference>
<dbReference type="InterPro" id="IPR011051">
    <property type="entry name" value="RmlC_Cupin_sf"/>
</dbReference>
<dbReference type="PANTHER" id="PTHR23418">
    <property type="entry name" value="ACIREDUCTONE DIOXYGENASE"/>
    <property type="match status" value="1"/>
</dbReference>
<dbReference type="PANTHER" id="PTHR23418:SF4">
    <property type="entry name" value="ACIREDUCTONE DIOXYGENASE 4"/>
    <property type="match status" value="1"/>
</dbReference>
<dbReference type="Pfam" id="PF03079">
    <property type="entry name" value="ARD"/>
    <property type="match status" value="1"/>
</dbReference>
<dbReference type="SUPFAM" id="SSF51182">
    <property type="entry name" value="RmlC-like cupins"/>
    <property type="match status" value="1"/>
</dbReference>
<organism>
    <name type="scientific">Arabidopsis thaliana</name>
    <name type="common">Mouse-ear cress</name>
    <dbReference type="NCBI Taxonomy" id="3702"/>
    <lineage>
        <taxon>Eukaryota</taxon>
        <taxon>Viridiplantae</taxon>
        <taxon>Streptophyta</taxon>
        <taxon>Embryophyta</taxon>
        <taxon>Tracheophyta</taxon>
        <taxon>Spermatophyta</taxon>
        <taxon>Magnoliopsida</taxon>
        <taxon>eudicotyledons</taxon>
        <taxon>Gunneridae</taxon>
        <taxon>Pentapetalae</taxon>
        <taxon>rosids</taxon>
        <taxon>malvids</taxon>
        <taxon>Brassicales</taxon>
        <taxon>Brassicaceae</taxon>
        <taxon>Camelineae</taxon>
        <taxon>Arabidopsis</taxon>
    </lineage>
</organism>
<keyword id="KW-0007">Acetylation</keyword>
<keyword id="KW-0028">Amino-acid biosynthesis</keyword>
<keyword id="KW-0963">Cytoplasm</keyword>
<keyword id="KW-0223">Dioxygenase</keyword>
<keyword id="KW-0408">Iron</keyword>
<keyword id="KW-0479">Metal-binding</keyword>
<keyword id="KW-0486">Methionine biosynthesis</keyword>
<keyword id="KW-0533">Nickel</keyword>
<keyword id="KW-0539">Nucleus</keyword>
<keyword id="KW-0560">Oxidoreductase</keyword>
<keyword id="KW-1185">Reference proteome</keyword>
<feature type="initiator methionine" description="Removed" evidence="3">
    <location>
        <position position="1"/>
    </location>
</feature>
<feature type="chain" id="PRO_0000223195" description="Acireductone dioxygenase 4">
    <location>
        <begin position="2"/>
        <end position="187"/>
    </location>
</feature>
<feature type="binding site" evidence="1">
    <location>
        <position position="89"/>
    </location>
    <ligand>
        <name>Fe(2+)</name>
        <dbReference type="ChEBI" id="CHEBI:29033"/>
        <note>for iron-dependent acireductone dioxygenase activity</note>
    </ligand>
</feature>
<feature type="binding site" evidence="1">
    <location>
        <position position="89"/>
    </location>
    <ligand>
        <name>Ni(2+)</name>
        <dbReference type="ChEBI" id="CHEBI:49786"/>
        <note>for nickel-dependent acireductone dioxygenase activity</note>
    </ligand>
</feature>
<feature type="binding site" evidence="1">
    <location>
        <position position="91"/>
    </location>
    <ligand>
        <name>Fe(2+)</name>
        <dbReference type="ChEBI" id="CHEBI:29033"/>
        <note>for iron-dependent acireductone dioxygenase activity</note>
    </ligand>
</feature>
<feature type="binding site" evidence="1">
    <location>
        <position position="91"/>
    </location>
    <ligand>
        <name>Ni(2+)</name>
        <dbReference type="ChEBI" id="CHEBI:49786"/>
        <note>for nickel-dependent acireductone dioxygenase activity</note>
    </ligand>
</feature>
<feature type="binding site" evidence="1">
    <location>
        <position position="95"/>
    </location>
    <ligand>
        <name>Fe(2+)</name>
        <dbReference type="ChEBI" id="CHEBI:29033"/>
        <note>for iron-dependent acireductone dioxygenase activity</note>
    </ligand>
</feature>
<feature type="binding site" evidence="1">
    <location>
        <position position="95"/>
    </location>
    <ligand>
        <name>Ni(2+)</name>
        <dbReference type="ChEBI" id="CHEBI:49786"/>
        <note>for nickel-dependent acireductone dioxygenase activity</note>
    </ligand>
</feature>
<feature type="binding site" evidence="1">
    <location>
        <position position="134"/>
    </location>
    <ligand>
        <name>Fe(2+)</name>
        <dbReference type="ChEBI" id="CHEBI:29033"/>
        <note>for iron-dependent acireductone dioxygenase activity</note>
    </ligand>
</feature>
<feature type="binding site" evidence="1">
    <location>
        <position position="134"/>
    </location>
    <ligand>
        <name>Ni(2+)</name>
        <dbReference type="ChEBI" id="CHEBI:49786"/>
        <note>for nickel-dependent acireductone dioxygenase activity</note>
    </ligand>
</feature>
<feature type="modified residue" description="N-acetylalanine" evidence="3">
    <location>
        <position position="2"/>
    </location>
</feature>
<feature type="sequence conflict" description="In Ref. 4; AAM63708." evidence="2" ref="4">
    <original>S</original>
    <variation>P</variation>
    <location>
        <position position="28"/>
    </location>
</feature>
<feature type="sequence conflict" description="In Ref. 4; AAM63708." evidence="2" ref="4">
    <original>S</original>
    <variation>I</variation>
    <location>
        <position position="54"/>
    </location>
</feature>
<feature type="sequence conflict" description="In Ref. 4; AAM63708." evidence="2" ref="4">
    <original>A</original>
    <variation>T</variation>
    <location>
        <position position="140"/>
    </location>
</feature>
<feature type="sequence conflict" description="In Ref. 4; AAM63708." evidence="2" ref="4">
    <original>K</original>
    <variation>Q</variation>
    <location>
        <position position="170"/>
    </location>
</feature>
<comment type="function">
    <text evidence="1">Catalyzes 2 different reactions between oxygen and the acireductone 1,2-dihydroxy-3-keto-5-methylthiopentene (DHK-MTPene) depending upon the metal bound in the active site. Fe-containing acireductone dioxygenase (Fe-ARD) produces formate and 2-keto-4-methylthiobutyrate (KMTB), the alpha-ketoacid precursor of methionine in the methionine recycle pathway. Ni-containing acireductone dioxygenase (Ni-ARD) produces methylthiopropionate, carbon monoxide and formate, and does not lie on the methionine recycle pathway.</text>
</comment>
<comment type="catalytic activity">
    <reaction evidence="1">
        <text>1,2-dihydroxy-5-(methylsulfanyl)pent-1-en-3-one + O2 = 4-methylsulfanyl-2-oxobutanoate + formate + 2 H(+)</text>
        <dbReference type="Rhea" id="RHEA:24504"/>
        <dbReference type="ChEBI" id="CHEBI:15378"/>
        <dbReference type="ChEBI" id="CHEBI:15379"/>
        <dbReference type="ChEBI" id="CHEBI:15740"/>
        <dbReference type="ChEBI" id="CHEBI:16723"/>
        <dbReference type="ChEBI" id="CHEBI:49252"/>
        <dbReference type="EC" id="1.13.11.54"/>
    </reaction>
</comment>
<comment type="catalytic activity">
    <reaction evidence="1">
        <text>1,2-dihydroxy-5-(methylsulfanyl)pent-1-en-3-one + O2 = 3-(methylsulfanyl)propanoate + CO + formate + 2 H(+)</text>
        <dbReference type="Rhea" id="RHEA:14161"/>
        <dbReference type="ChEBI" id="CHEBI:15378"/>
        <dbReference type="ChEBI" id="CHEBI:15379"/>
        <dbReference type="ChEBI" id="CHEBI:15740"/>
        <dbReference type="ChEBI" id="CHEBI:17245"/>
        <dbReference type="ChEBI" id="CHEBI:49016"/>
        <dbReference type="ChEBI" id="CHEBI:49252"/>
        <dbReference type="EC" id="1.13.11.53"/>
    </reaction>
</comment>
<comment type="cofactor">
    <cofactor evidence="1">
        <name>Fe(2+)</name>
        <dbReference type="ChEBI" id="CHEBI:29033"/>
    </cofactor>
    <cofactor evidence="1">
        <name>Ni(2+)</name>
        <dbReference type="ChEBI" id="CHEBI:49786"/>
    </cofactor>
    <text evidence="1">Binds either 1 Fe or Ni cation per monomer. Iron-binding promotes an acireductone dioxygenase reaction producing 2-keto-4-methylthiobutyrate, while nickel-binding promotes an acireductone dioxygenase reaction producing 3-(methylsulfanyl)propanoate.</text>
</comment>
<comment type="pathway">
    <text evidence="1">Amino-acid biosynthesis; L-methionine biosynthesis via salvage pathway; L-methionine from S-methyl-5-thio-alpha-D-ribose 1-phosphate: step 5/6.</text>
</comment>
<comment type="subcellular location">
    <subcellularLocation>
        <location evidence="1">Cytoplasm</location>
    </subcellularLocation>
    <subcellularLocation>
        <location evidence="1">Nucleus</location>
    </subcellularLocation>
</comment>
<comment type="similarity">
    <text evidence="1">Belongs to the acireductone dioxygenase (ARD) family.</text>
</comment>
<comment type="sequence caution" evidence="2">
    <conflict type="erroneous gene model prediction">
        <sequence resource="EMBL-CDS" id="BAB11314"/>
    </conflict>
</comment>
<proteinExistence type="evidence at protein level"/>
<name>MTND4_ARATH</name>
<accession>Q8H185</accession>
<accession>Q8LCE2</accession>
<accession>Q9FG79</accession>
<gene>
    <name type="primary">ARD4</name>
    <name type="ordered locus">At5g43850</name>
    <name type="ORF">MQD19.21</name>
</gene>
<reference key="1">
    <citation type="submission" date="1999-04" db="EMBL/GenBank/DDBJ databases">
        <title>Structural analysis of Arabidopsis thaliana chromosome 5. XI.</title>
        <authorList>
            <person name="Kaneko T."/>
            <person name="Katoh T."/>
            <person name="Asamizu E."/>
            <person name="Sato S."/>
            <person name="Nakamura Y."/>
            <person name="Kotani H."/>
            <person name="Tabata S."/>
        </authorList>
    </citation>
    <scope>NUCLEOTIDE SEQUENCE [LARGE SCALE GENOMIC DNA]</scope>
    <source>
        <strain>cv. Columbia</strain>
    </source>
</reference>
<reference key="2">
    <citation type="journal article" date="2017" name="Plant J.">
        <title>Araport11: a complete reannotation of the Arabidopsis thaliana reference genome.</title>
        <authorList>
            <person name="Cheng C.Y."/>
            <person name="Krishnakumar V."/>
            <person name="Chan A.P."/>
            <person name="Thibaud-Nissen F."/>
            <person name="Schobel S."/>
            <person name="Town C.D."/>
        </authorList>
    </citation>
    <scope>GENOME REANNOTATION</scope>
    <source>
        <strain>cv. Columbia</strain>
    </source>
</reference>
<reference key="3">
    <citation type="journal article" date="2003" name="Science">
        <title>Empirical analysis of transcriptional activity in the Arabidopsis genome.</title>
        <authorList>
            <person name="Yamada K."/>
            <person name="Lim J."/>
            <person name="Dale J.M."/>
            <person name="Chen H."/>
            <person name="Shinn P."/>
            <person name="Palm C.J."/>
            <person name="Southwick A.M."/>
            <person name="Wu H.C."/>
            <person name="Kim C.J."/>
            <person name="Nguyen M."/>
            <person name="Pham P.K."/>
            <person name="Cheuk R.F."/>
            <person name="Karlin-Newmann G."/>
            <person name="Liu S.X."/>
            <person name="Lam B."/>
            <person name="Sakano H."/>
            <person name="Wu T."/>
            <person name="Yu G."/>
            <person name="Miranda M."/>
            <person name="Quach H.L."/>
            <person name="Tripp M."/>
            <person name="Chang C.H."/>
            <person name="Lee J.M."/>
            <person name="Toriumi M.J."/>
            <person name="Chan M.M."/>
            <person name="Tang C.C."/>
            <person name="Onodera C.S."/>
            <person name="Deng J.M."/>
            <person name="Akiyama K."/>
            <person name="Ansari Y."/>
            <person name="Arakawa T."/>
            <person name="Banh J."/>
            <person name="Banno F."/>
            <person name="Bowser L."/>
            <person name="Brooks S.Y."/>
            <person name="Carninci P."/>
            <person name="Chao Q."/>
            <person name="Choy N."/>
            <person name="Enju A."/>
            <person name="Goldsmith A.D."/>
            <person name="Gurjal M."/>
            <person name="Hansen N.F."/>
            <person name="Hayashizaki Y."/>
            <person name="Johnson-Hopson C."/>
            <person name="Hsuan V.W."/>
            <person name="Iida K."/>
            <person name="Karnes M."/>
            <person name="Khan S."/>
            <person name="Koesema E."/>
            <person name="Ishida J."/>
            <person name="Jiang P.X."/>
            <person name="Jones T."/>
            <person name="Kawai J."/>
            <person name="Kamiya A."/>
            <person name="Meyers C."/>
            <person name="Nakajima M."/>
            <person name="Narusaka M."/>
            <person name="Seki M."/>
            <person name="Sakurai T."/>
            <person name="Satou M."/>
            <person name="Tamse R."/>
            <person name="Vaysberg M."/>
            <person name="Wallender E.K."/>
            <person name="Wong C."/>
            <person name="Yamamura Y."/>
            <person name="Yuan S."/>
            <person name="Shinozaki K."/>
            <person name="Davis R.W."/>
            <person name="Theologis A."/>
            <person name="Ecker J.R."/>
        </authorList>
    </citation>
    <scope>NUCLEOTIDE SEQUENCE [LARGE SCALE MRNA]</scope>
    <source>
        <strain>cv. Columbia</strain>
    </source>
</reference>
<reference key="4">
    <citation type="submission" date="2002-03" db="EMBL/GenBank/DDBJ databases">
        <title>Full-length cDNA from Arabidopsis thaliana.</title>
        <authorList>
            <person name="Brover V.V."/>
            <person name="Troukhan M.E."/>
            <person name="Alexandrov N.A."/>
            <person name="Lu Y.-P."/>
            <person name="Flavell R.B."/>
            <person name="Feldmann K.A."/>
        </authorList>
    </citation>
    <scope>NUCLEOTIDE SEQUENCE [LARGE SCALE MRNA]</scope>
</reference>
<reference key="5">
    <citation type="journal article" date="2012" name="Mol. Cell. Proteomics">
        <title>Comparative large-scale characterisation of plant vs. mammal proteins reveals similar and idiosyncratic N-alpha acetylation features.</title>
        <authorList>
            <person name="Bienvenut W.V."/>
            <person name="Sumpton D."/>
            <person name="Martinez A."/>
            <person name="Lilla S."/>
            <person name="Espagne C."/>
            <person name="Meinnel T."/>
            <person name="Giglione C."/>
        </authorList>
    </citation>
    <scope>ACETYLATION [LARGE SCALE ANALYSIS] AT ALA-2</scope>
    <scope>CLEAVAGE OF INITIATOR METHIONINE [LARGE SCALE ANALYSIS]</scope>
    <scope>IDENTIFICATION BY MASS SPECTROMETRY [LARGE SCALE ANALYSIS]</scope>
</reference>
<evidence type="ECO:0000255" key="1">
    <source>
        <dbReference type="HAMAP-Rule" id="MF_03154"/>
    </source>
</evidence>
<evidence type="ECO:0000305" key="2"/>
<evidence type="ECO:0007744" key="3">
    <source>
    </source>
</evidence>